<protein>
    <recommendedName>
        <fullName evidence="1">4-deoxy-L-threo-5-hexosulose-uronate ketol-isomerase</fullName>
        <ecNumber evidence="1">5.3.1.17</ecNumber>
    </recommendedName>
    <alternativeName>
        <fullName evidence="1">5-keto-4-deoxyuronate isomerase</fullName>
    </alternativeName>
    <alternativeName>
        <fullName evidence="1">DKI isomerase</fullName>
    </alternativeName>
</protein>
<dbReference type="EC" id="5.3.1.17" evidence="1"/>
<dbReference type="EMBL" id="CP000813">
    <property type="protein sequence ID" value="ABV63899.1"/>
    <property type="molecule type" value="Genomic_DNA"/>
</dbReference>
<dbReference type="RefSeq" id="WP_012011477.1">
    <property type="nucleotide sequence ID" value="NC_009848.4"/>
</dbReference>
<dbReference type="SMR" id="A8FI32"/>
<dbReference type="STRING" id="315750.BPUM_3246"/>
<dbReference type="GeneID" id="5622536"/>
<dbReference type="KEGG" id="bpu:BPUM_3246"/>
<dbReference type="eggNOG" id="COG3717">
    <property type="taxonomic scope" value="Bacteria"/>
</dbReference>
<dbReference type="HOGENOM" id="CLU_062609_0_0_9"/>
<dbReference type="OrthoDB" id="9770644at2"/>
<dbReference type="UniPathway" id="UPA00545">
    <property type="reaction ID" value="UER00826"/>
</dbReference>
<dbReference type="Proteomes" id="UP000001355">
    <property type="component" value="Chromosome"/>
</dbReference>
<dbReference type="GO" id="GO:0008697">
    <property type="term" value="F:4-deoxy-L-threo-5-hexosulose-uronate ketol-isomerase activity"/>
    <property type="evidence" value="ECO:0007669"/>
    <property type="project" value="UniProtKB-UniRule"/>
</dbReference>
<dbReference type="GO" id="GO:0008270">
    <property type="term" value="F:zinc ion binding"/>
    <property type="evidence" value="ECO:0007669"/>
    <property type="project" value="UniProtKB-UniRule"/>
</dbReference>
<dbReference type="GO" id="GO:0019698">
    <property type="term" value="P:D-galacturonate catabolic process"/>
    <property type="evidence" value="ECO:0007669"/>
    <property type="project" value="TreeGrafter"/>
</dbReference>
<dbReference type="GO" id="GO:0042840">
    <property type="term" value="P:D-glucuronate catabolic process"/>
    <property type="evidence" value="ECO:0007669"/>
    <property type="project" value="TreeGrafter"/>
</dbReference>
<dbReference type="GO" id="GO:0045490">
    <property type="term" value="P:pectin catabolic process"/>
    <property type="evidence" value="ECO:0007669"/>
    <property type="project" value="UniProtKB-UniRule"/>
</dbReference>
<dbReference type="CDD" id="cd20491">
    <property type="entry name" value="cupin_KduI_C"/>
    <property type="match status" value="1"/>
</dbReference>
<dbReference type="CDD" id="cd20294">
    <property type="entry name" value="cupin_KduI_N"/>
    <property type="match status" value="1"/>
</dbReference>
<dbReference type="Gene3D" id="2.60.120.10">
    <property type="entry name" value="Jelly Rolls"/>
    <property type="match status" value="1"/>
</dbReference>
<dbReference type="Gene3D" id="2.60.120.520">
    <property type="entry name" value="pectin degrading enzyme 5-keto 4- deoxyuronate isomerase, domain 1"/>
    <property type="match status" value="1"/>
</dbReference>
<dbReference type="HAMAP" id="MF_00687">
    <property type="entry name" value="KduI"/>
    <property type="match status" value="1"/>
</dbReference>
<dbReference type="InterPro" id="IPR007045">
    <property type="entry name" value="KduI"/>
</dbReference>
<dbReference type="InterPro" id="IPR021120">
    <property type="entry name" value="KduI/IolB_isomerase"/>
</dbReference>
<dbReference type="InterPro" id="IPR027449">
    <property type="entry name" value="KduI_N"/>
</dbReference>
<dbReference type="InterPro" id="IPR014710">
    <property type="entry name" value="RmlC-like_jellyroll"/>
</dbReference>
<dbReference type="InterPro" id="IPR011051">
    <property type="entry name" value="RmlC_Cupin_sf"/>
</dbReference>
<dbReference type="NCBIfam" id="NF002091">
    <property type="entry name" value="PRK00924.1"/>
    <property type="match status" value="1"/>
</dbReference>
<dbReference type="PANTHER" id="PTHR38461">
    <property type="entry name" value="4-DEOXY-L-THREO-5-HEXOSULOSE-URONATE KETOL-ISOMERASE"/>
    <property type="match status" value="1"/>
</dbReference>
<dbReference type="PANTHER" id="PTHR38461:SF1">
    <property type="entry name" value="4-DEOXY-L-THREO-5-HEXOSULOSE-URONATE KETOL-ISOMERASE"/>
    <property type="match status" value="1"/>
</dbReference>
<dbReference type="Pfam" id="PF04962">
    <property type="entry name" value="KduI"/>
    <property type="match status" value="1"/>
</dbReference>
<dbReference type="PIRSF" id="PIRSF006625">
    <property type="entry name" value="KduI"/>
    <property type="match status" value="1"/>
</dbReference>
<dbReference type="SUPFAM" id="SSF51182">
    <property type="entry name" value="RmlC-like cupins"/>
    <property type="match status" value="1"/>
</dbReference>
<proteinExistence type="inferred from homology"/>
<evidence type="ECO:0000255" key="1">
    <source>
        <dbReference type="HAMAP-Rule" id="MF_00687"/>
    </source>
</evidence>
<name>KDUI_BACP2</name>
<gene>
    <name evidence="1" type="primary">kduI</name>
    <name type="ordered locus">BPUM_3246</name>
</gene>
<feature type="chain" id="PRO_1000061999" description="4-deoxy-L-threo-5-hexosulose-uronate ketol-isomerase">
    <location>
        <begin position="1"/>
        <end position="275"/>
    </location>
</feature>
<feature type="binding site" evidence="1">
    <location>
        <position position="193"/>
    </location>
    <ligand>
        <name>Zn(2+)</name>
        <dbReference type="ChEBI" id="CHEBI:29105"/>
    </ligand>
</feature>
<feature type="binding site" evidence="1">
    <location>
        <position position="195"/>
    </location>
    <ligand>
        <name>Zn(2+)</name>
        <dbReference type="ChEBI" id="CHEBI:29105"/>
    </ligand>
</feature>
<feature type="binding site" evidence="1">
    <location>
        <position position="200"/>
    </location>
    <ligand>
        <name>Zn(2+)</name>
        <dbReference type="ChEBI" id="CHEBI:29105"/>
    </ligand>
</feature>
<feature type="binding site" evidence="1">
    <location>
        <position position="242"/>
    </location>
    <ligand>
        <name>Zn(2+)</name>
        <dbReference type="ChEBI" id="CHEBI:29105"/>
    </ligand>
</feature>
<reference key="1">
    <citation type="journal article" date="2007" name="PLoS ONE">
        <title>Paradoxical DNA repair and peroxide resistance gene conservation in Bacillus pumilus SAFR-032.</title>
        <authorList>
            <person name="Gioia J."/>
            <person name="Yerrapragada S."/>
            <person name="Qin X."/>
            <person name="Jiang H."/>
            <person name="Igboeli O.C."/>
            <person name="Muzny D."/>
            <person name="Dugan-Rocha S."/>
            <person name="Ding Y."/>
            <person name="Hawes A."/>
            <person name="Liu W."/>
            <person name="Perez L."/>
            <person name="Kovar C."/>
            <person name="Dinh H."/>
            <person name="Lee S."/>
            <person name="Nazareth L."/>
            <person name="Blyth P."/>
            <person name="Holder M."/>
            <person name="Buhay C."/>
            <person name="Tirumalai M.R."/>
            <person name="Liu Y."/>
            <person name="Dasgupta I."/>
            <person name="Bokhetache L."/>
            <person name="Fujita M."/>
            <person name="Karouia F."/>
            <person name="Eswara Moorthy P."/>
            <person name="Siefert J."/>
            <person name="Uzman A."/>
            <person name="Buzumbo P."/>
            <person name="Verma A."/>
            <person name="Zwiya H."/>
            <person name="McWilliams B.D."/>
            <person name="Olowu A."/>
            <person name="Clinkenbeard K.D."/>
            <person name="Newcombe D."/>
            <person name="Golebiewski L."/>
            <person name="Petrosino J.F."/>
            <person name="Nicholson W.L."/>
            <person name="Fox G.E."/>
            <person name="Venkateswaran K."/>
            <person name="Highlander S.K."/>
            <person name="Weinstock G.M."/>
        </authorList>
    </citation>
    <scope>NUCLEOTIDE SEQUENCE [LARGE SCALE GENOMIC DNA]</scope>
    <source>
        <strain>SAFR-032</strain>
    </source>
</reference>
<organism>
    <name type="scientific">Bacillus pumilus (strain SAFR-032)</name>
    <dbReference type="NCBI Taxonomy" id="315750"/>
    <lineage>
        <taxon>Bacteria</taxon>
        <taxon>Bacillati</taxon>
        <taxon>Bacillota</taxon>
        <taxon>Bacilli</taxon>
        <taxon>Bacillales</taxon>
        <taxon>Bacillaceae</taxon>
        <taxon>Bacillus</taxon>
    </lineage>
</organism>
<accession>A8FI32</accession>
<sequence>MENRYAVHPEQVKRFTTEELRRHFHIPTLFVSGELKLYYSHEDRVVIGGVMPSAEPLKLDAGDFLRTEYFLERREIGIVNVGGQGTVTVDGEAFVLEHKDFLYIGLGHEDVQFASASGEEAKFYLVSATAHQAYPTQKAAIAELTPNHLGEASASNVRNLYQVIHANGIQSCQLMMGITQLETNNTWNTMPAHIHDRRMEVYLYLDIEEDARVFHFMGEPSETRHLVLANEEAVISPAWSIHSGSGTANYSFIWAMAGENYTFKDMDFVPMDQLR</sequence>
<comment type="function">
    <text evidence="1">Catalyzes the isomerization of 5-dehydro-4-deoxy-D-glucuronate to 3-deoxy-D-glycero-2,5-hexodiulosonate.</text>
</comment>
<comment type="catalytic activity">
    <reaction evidence="1">
        <text>5-dehydro-4-deoxy-D-glucuronate = 3-deoxy-D-glycero-2,5-hexodiulosonate</text>
        <dbReference type="Rhea" id="RHEA:23896"/>
        <dbReference type="ChEBI" id="CHEBI:17117"/>
        <dbReference type="ChEBI" id="CHEBI:29071"/>
        <dbReference type="EC" id="5.3.1.17"/>
    </reaction>
</comment>
<comment type="cofactor">
    <cofactor evidence="1">
        <name>Zn(2+)</name>
        <dbReference type="ChEBI" id="CHEBI:29105"/>
    </cofactor>
    <text evidence="1">Binds 1 zinc ion per subunit.</text>
</comment>
<comment type="pathway">
    <text evidence="1">Glycan metabolism; pectin degradation; 2-dehydro-3-deoxy-D-gluconate from pectin: step 4/5.</text>
</comment>
<comment type="similarity">
    <text evidence="1">Belongs to the KduI family.</text>
</comment>
<keyword id="KW-0413">Isomerase</keyword>
<keyword id="KW-0479">Metal-binding</keyword>
<keyword id="KW-0862">Zinc</keyword>